<comment type="function">
    <text evidence="1">DNA-dependent RNA polymerase catalyzes the transcription of DNA into RNA using the four ribonucleoside triphosphates as substrates.</text>
</comment>
<comment type="catalytic activity">
    <reaction evidence="1">
        <text>RNA(n) + a ribonucleoside 5'-triphosphate = RNA(n+1) + diphosphate</text>
        <dbReference type="Rhea" id="RHEA:21248"/>
        <dbReference type="Rhea" id="RHEA-COMP:14527"/>
        <dbReference type="Rhea" id="RHEA-COMP:17342"/>
        <dbReference type="ChEBI" id="CHEBI:33019"/>
        <dbReference type="ChEBI" id="CHEBI:61557"/>
        <dbReference type="ChEBI" id="CHEBI:140395"/>
        <dbReference type="EC" id="2.7.7.6"/>
    </reaction>
</comment>
<comment type="subunit">
    <text evidence="1">Homodimer. The RNAP catalytic core consists of 2 alpha, 1 beta, 1 beta' and 1 omega subunit. When a sigma factor is associated with the core the holoenzyme is formed, which can initiate transcription.</text>
</comment>
<comment type="domain">
    <text evidence="1">The N-terminal domain is essential for RNAP assembly and basal transcription, whereas the C-terminal domain is involved in interaction with transcriptional regulators and with upstream promoter elements.</text>
</comment>
<comment type="similarity">
    <text evidence="1">Belongs to the RNA polymerase alpha chain family.</text>
</comment>
<reference key="1">
    <citation type="journal article" date="2008" name="J. Bacteriol.">
        <title>The pangenome structure of Escherichia coli: comparative genomic analysis of E. coli commensal and pathogenic isolates.</title>
        <authorList>
            <person name="Rasko D.A."/>
            <person name="Rosovitz M.J."/>
            <person name="Myers G.S.A."/>
            <person name="Mongodin E.F."/>
            <person name="Fricke W.F."/>
            <person name="Gajer P."/>
            <person name="Crabtree J."/>
            <person name="Sebaihia M."/>
            <person name="Thomson N.R."/>
            <person name="Chaudhuri R."/>
            <person name="Henderson I.R."/>
            <person name="Sperandio V."/>
            <person name="Ravel J."/>
        </authorList>
    </citation>
    <scope>NUCLEOTIDE SEQUENCE [LARGE SCALE GENOMIC DNA]</scope>
    <source>
        <strain>HS</strain>
    </source>
</reference>
<evidence type="ECO:0000255" key="1">
    <source>
        <dbReference type="HAMAP-Rule" id="MF_00059"/>
    </source>
</evidence>
<accession>A8A5A0</accession>
<name>RPOA_ECOHS</name>
<sequence>MQGSVTEFLKPRLVDIEQVSSTHAKVTLEPLERGFGHTLGNALRRILLSSMPGCAVTEVEIDGVLHEYSTKEGVQEDILEILLNLKGLAVRVQGKDEVILTLNKSGIGPVTAADITHDGDVEIVKPQHVICHLTDENASISMRIKVQRGRGYVPASTRIHSEEDERPIGRLLVDACYSPVERIAYNVEAARVEQRTDLDKLVIEMETNGTIDPEEAIRRAATILAEQLEAFVDLRDVRQPEVKEEKPEFDPILLRPVDDLELTVRSANCLKAEAIHYIGDLVQRTEVELLKTPNLGKKSLTEIKDVLASRGLSLGMRLENWPPASIADE</sequence>
<feature type="chain" id="PRO_0000323631" description="DNA-directed RNA polymerase subunit alpha">
    <location>
        <begin position="1"/>
        <end position="329"/>
    </location>
</feature>
<feature type="region of interest" description="Alpha N-terminal domain (alpha-NTD)" evidence="1">
    <location>
        <begin position="1"/>
        <end position="235"/>
    </location>
</feature>
<feature type="region of interest" description="Alpha C-terminal domain (alpha-CTD)" evidence="1">
    <location>
        <begin position="249"/>
        <end position="329"/>
    </location>
</feature>
<dbReference type="EC" id="2.7.7.6" evidence="1"/>
<dbReference type="EMBL" id="CP000802">
    <property type="protein sequence ID" value="ABV07704.1"/>
    <property type="molecule type" value="Genomic_DNA"/>
</dbReference>
<dbReference type="RefSeq" id="WP_001162094.1">
    <property type="nucleotide sequence ID" value="NC_009800.1"/>
</dbReference>
<dbReference type="SMR" id="A8A5A0"/>
<dbReference type="GeneID" id="93778692"/>
<dbReference type="KEGG" id="ecx:EcHS_A3489"/>
<dbReference type="HOGENOM" id="CLU_053084_0_0_6"/>
<dbReference type="GO" id="GO:0005737">
    <property type="term" value="C:cytoplasm"/>
    <property type="evidence" value="ECO:0007669"/>
    <property type="project" value="UniProtKB-ARBA"/>
</dbReference>
<dbReference type="GO" id="GO:0000428">
    <property type="term" value="C:DNA-directed RNA polymerase complex"/>
    <property type="evidence" value="ECO:0007669"/>
    <property type="project" value="UniProtKB-KW"/>
</dbReference>
<dbReference type="GO" id="GO:0003677">
    <property type="term" value="F:DNA binding"/>
    <property type="evidence" value="ECO:0007669"/>
    <property type="project" value="UniProtKB-UniRule"/>
</dbReference>
<dbReference type="GO" id="GO:0003899">
    <property type="term" value="F:DNA-directed RNA polymerase activity"/>
    <property type="evidence" value="ECO:0007669"/>
    <property type="project" value="UniProtKB-UniRule"/>
</dbReference>
<dbReference type="GO" id="GO:0046983">
    <property type="term" value="F:protein dimerization activity"/>
    <property type="evidence" value="ECO:0007669"/>
    <property type="project" value="InterPro"/>
</dbReference>
<dbReference type="GO" id="GO:0006351">
    <property type="term" value="P:DNA-templated transcription"/>
    <property type="evidence" value="ECO:0007669"/>
    <property type="project" value="UniProtKB-UniRule"/>
</dbReference>
<dbReference type="CDD" id="cd06928">
    <property type="entry name" value="RNAP_alpha_NTD"/>
    <property type="match status" value="1"/>
</dbReference>
<dbReference type="FunFam" id="1.10.150.20:FF:000001">
    <property type="entry name" value="DNA-directed RNA polymerase subunit alpha"/>
    <property type="match status" value="1"/>
</dbReference>
<dbReference type="FunFam" id="2.170.120.12:FF:000001">
    <property type="entry name" value="DNA-directed RNA polymerase subunit alpha"/>
    <property type="match status" value="1"/>
</dbReference>
<dbReference type="Gene3D" id="1.10.150.20">
    <property type="entry name" value="5' to 3' exonuclease, C-terminal subdomain"/>
    <property type="match status" value="1"/>
</dbReference>
<dbReference type="Gene3D" id="2.170.120.12">
    <property type="entry name" value="DNA-directed RNA polymerase, insert domain"/>
    <property type="match status" value="1"/>
</dbReference>
<dbReference type="Gene3D" id="3.30.1360.10">
    <property type="entry name" value="RNA polymerase, RBP11-like subunit"/>
    <property type="match status" value="1"/>
</dbReference>
<dbReference type="HAMAP" id="MF_00059">
    <property type="entry name" value="RNApol_bact_RpoA"/>
    <property type="match status" value="1"/>
</dbReference>
<dbReference type="InterPro" id="IPR011262">
    <property type="entry name" value="DNA-dir_RNA_pol_insert"/>
</dbReference>
<dbReference type="InterPro" id="IPR011263">
    <property type="entry name" value="DNA-dir_RNA_pol_RpoA/D/Rpb3"/>
</dbReference>
<dbReference type="InterPro" id="IPR011773">
    <property type="entry name" value="DNA-dir_RpoA"/>
</dbReference>
<dbReference type="InterPro" id="IPR036603">
    <property type="entry name" value="RBP11-like"/>
</dbReference>
<dbReference type="InterPro" id="IPR011260">
    <property type="entry name" value="RNAP_asu_C"/>
</dbReference>
<dbReference type="InterPro" id="IPR036643">
    <property type="entry name" value="RNApol_insert_sf"/>
</dbReference>
<dbReference type="NCBIfam" id="NF003513">
    <property type="entry name" value="PRK05182.1-2"/>
    <property type="match status" value="1"/>
</dbReference>
<dbReference type="NCBIfam" id="NF003519">
    <property type="entry name" value="PRK05182.2-5"/>
    <property type="match status" value="1"/>
</dbReference>
<dbReference type="NCBIfam" id="TIGR02027">
    <property type="entry name" value="rpoA"/>
    <property type="match status" value="1"/>
</dbReference>
<dbReference type="Pfam" id="PF01000">
    <property type="entry name" value="RNA_pol_A_bac"/>
    <property type="match status" value="1"/>
</dbReference>
<dbReference type="Pfam" id="PF03118">
    <property type="entry name" value="RNA_pol_A_CTD"/>
    <property type="match status" value="1"/>
</dbReference>
<dbReference type="Pfam" id="PF01193">
    <property type="entry name" value="RNA_pol_L"/>
    <property type="match status" value="1"/>
</dbReference>
<dbReference type="SMART" id="SM00662">
    <property type="entry name" value="RPOLD"/>
    <property type="match status" value="1"/>
</dbReference>
<dbReference type="SUPFAM" id="SSF47789">
    <property type="entry name" value="C-terminal domain of RNA polymerase alpha subunit"/>
    <property type="match status" value="1"/>
</dbReference>
<dbReference type="SUPFAM" id="SSF56553">
    <property type="entry name" value="Insert subdomain of RNA polymerase alpha subunit"/>
    <property type="match status" value="1"/>
</dbReference>
<dbReference type="SUPFAM" id="SSF55257">
    <property type="entry name" value="RBP11-like subunits of RNA polymerase"/>
    <property type="match status" value="1"/>
</dbReference>
<organism>
    <name type="scientific">Escherichia coli O9:H4 (strain HS)</name>
    <dbReference type="NCBI Taxonomy" id="331112"/>
    <lineage>
        <taxon>Bacteria</taxon>
        <taxon>Pseudomonadati</taxon>
        <taxon>Pseudomonadota</taxon>
        <taxon>Gammaproteobacteria</taxon>
        <taxon>Enterobacterales</taxon>
        <taxon>Enterobacteriaceae</taxon>
        <taxon>Escherichia</taxon>
    </lineage>
</organism>
<keyword id="KW-0240">DNA-directed RNA polymerase</keyword>
<keyword id="KW-0548">Nucleotidyltransferase</keyword>
<keyword id="KW-0804">Transcription</keyword>
<keyword id="KW-0808">Transferase</keyword>
<proteinExistence type="inferred from homology"/>
<gene>
    <name evidence="1" type="primary">rpoA</name>
    <name type="ordered locus">EcHS_A3489</name>
</gene>
<protein>
    <recommendedName>
        <fullName evidence="1">DNA-directed RNA polymerase subunit alpha</fullName>
        <shortName evidence="1">RNAP subunit alpha</shortName>
        <ecNumber evidence="1">2.7.7.6</ecNumber>
    </recommendedName>
    <alternativeName>
        <fullName evidence="1">RNA polymerase subunit alpha</fullName>
    </alternativeName>
    <alternativeName>
        <fullName evidence="1">Transcriptase subunit alpha</fullName>
    </alternativeName>
</protein>